<dbReference type="EC" id="4.1.1.37" evidence="1"/>
<dbReference type="EMBL" id="CP001638">
    <property type="protein sequence ID" value="ACS23542.1"/>
    <property type="molecule type" value="Genomic_DNA"/>
</dbReference>
<dbReference type="SMR" id="C5D6M5"/>
<dbReference type="STRING" id="471223.GWCH70_0649"/>
<dbReference type="KEGG" id="gwc:GWCH70_0649"/>
<dbReference type="eggNOG" id="COG0407">
    <property type="taxonomic scope" value="Bacteria"/>
</dbReference>
<dbReference type="HOGENOM" id="CLU_040933_0_1_9"/>
<dbReference type="OrthoDB" id="9806656at2"/>
<dbReference type="UniPathway" id="UPA00251">
    <property type="reaction ID" value="UER00321"/>
</dbReference>
<dbReference type="GO" id="GO:0005829">
    <property type="term" value="C:cytosol"/>
    <property type="evidence" value="ECO:0007669"/>
    <property type="project" value="TreeGrafter"/>
</dbReference>
<dbReference type="GO" id="GO:0004853">
    <property type="term" value="F:uroporphyrinogen decarboxylase activity"/>
    <property type="evidence" value="ECO:0007669"/>
    <property type="project" value="UniProtKB-UniRule"/>
</dbReference>
<dbReference type="GO" id="GO:0006782">
    <property type="term" value="P:protoporphyrinogen IX biosynthetic process"/>
    <property type="evidence" value="ECO:0007669"/>
    <property type="project" value="UniProtKB-UniRule"/>
</dbReference>
<dbReference type="CDD" id="cd00717">
    <property type="entry name" value="URO-D"/>
    <property type="match status" value="1"/>
</dbReference>
<dbReference type="FunFam" id="3.20.20.210:FF:000005">
    <property type="entry name" value="Uroporphyrinogen decarboxylase"/>
    <property type="match status" value="1"/>
</dbReference>
<dbReference type="Gene3D" id="3.20.20.210">
    <property type="match status" value="1"/>
</dbReference>
<dbReference type="HAMAP" id="MF_00218">
    <property type="entry name" value="URO_D"/>
    <property type="match status" value="1"/>
</dbReference>
<dbReference type="InterPro" id="IPR038071">
    <property type="entry name" value="UROD/MetE-like_sf"/>
</dbReference>
<dbReference type="InterPro" id="IPR006361">
    <property type="entry name" value="Uroporphyrinogen_deCO2ase_HemE"/>
</dbReference>
<dbReference type="InterPro" id="IPR000257">
    <property type="entry name" value="Uroporphyrinogen_deCOase"/>
</dbReference>
<dbReference type="NCBIfam" id="TIGR01464">
    <property type="entry name" value="hemE"/>
    <property type="match status" value="1"/>
</dbReference>
<dbReference type="PANTHER" id="PTHR21091">
    <property type="entry name" value="METHYLTETRAHYDROFOLATE:HOMOCYSTEINE METHYLTRANSFERASE RELATED"/>
    <property type="match status" value="1"/>
</dbReference>
<dbReference type="PANTHER" id="PTHR21091:SF169">
    <property type="entry name" value="UROPORPHYRINOGEN DECARBOXYLASE"/>
    <property type="match status" value="1"/>
</dbReference>
<dbReference type="Pfam" id="PF01208">
    <property type="entry name" value="URO-D"/>
    <property type="match status" value="1"/>
</dbReference>
<dbReference type="SUPFAM" id="SSF51726">
    <property type="entry name" value="UROD/MetE-like"/>
    <property type="match status" value="1"/>
</dbReference>
<dbReference type="PROSITE" id="PS00906">
    <property type="entry name" value="UROD_1"/>
    <property type="match status" value="1"/>
</dbReference>
<dbReference type="PROSITE" id="PS00907">
    <property type="entry name" value="UROD_2"/>
    <property type="match status" value="1"/>
</dbReference>
<sequence length="345" mass="39031">MSKQKNDTFLRACRGEKTDYVPVWYMRQAGRSQPEYRALKEKYSLFEITHQPELCAYVTRLPVEQYHVDAAILYKDIMSPLPAIGVDVEIKAGVGPVIANPIRSLADVEKLGEIHPEEDVPYVLETIKLLTTEQLNVPLIGFAGAPFTLASYMIEGGPSKNYNKTKAFMYAEPKAWFALMDKLADMTIRYVKAQIRAGASAIQIFDSWVGAVNVDDYRTFIKPTMARIFAALREENVPLIMFGVGASHLAKEWNDLPLDVIGLDWRLSIREARERGITKALQGNLDPAVLLAPWEVIEKRVKQILDEGMEQPGYIFNLGHGIFPEIQPETLKRLTAFIHDYTSRK</sequence>
<organism>
    <name type="scientific">Geobacillus sp. (strain WCH70)</name>
    <dbReference type="NCBI Taxonomy" id="471223"/>
    <lineage>
        <taxon>Bacteria</taxon>
        <taxon>Bacillati</taxon>
        <taxon>Bacillota</taxon>
        <taxon>Bacilli</taxon>
        <taxon>Bacillales</taxon>
        <taxon>Anoxybacillaceae</taxon>
        <taxon>Geobacillus</taxon>
    </lineage>
</organism>
<protein>
    <recommendedName>
        <fullName evidence="1">Uroporphyrinogen decarboxylase</fullName>
        <shortName evidence="1">UPD</shortName>
        <shortName evidence="1">URO-D</shortName>
        <ecNumber evidence="1">4.1.1.37</ecNumber>
    </recommendedName>
</protein>
<feature type="chain" id="PRO_1000204233" description="Uroporphyrinogen decarboxylase">
    <location>
        <begin position="1"/>
        <end position="345"/>
    </location>
</feature>
<feature type="binding site" evidence="1">
    <location>
        <begin position="27"/>
        <end position="31"/>
    </location>
    <ligand>
        <name>substrate</name>
    </ligand>
</feature>
<feature type="binding site" evidence="1">
    <location>
        <position position="46"/>
    </location>
    <ligand>
        <name>substrate</name>
    </ligand>
</feature>
<feature type="binding site" evidence="1">
    <location>
        <position position="76"/>
    </location>
    <ligand>
        <name>substrate</name>
    </ligand>
</feature>
<feature type="binding site" evidence="1">
    <location>
        <position position="152"/>
    </location>
    <ligand>
        <name>substrate</name>
    </ligand>
</feature>
<feature type="binding site" evidence="1">
    <location>
        <position position="207"/>
    </location>
    <ligand>
        <name>substrate</name>
    </ligand>
</feature>
<feature type="binding site" evidence="1">
    <location>
        <position position="320"/>
    </location>
    <ligand>
        <name>substrate</name>
    </ligand>
</feature>
<feature type="site" description="Transition state stabilizer" evidence="1">
    <location>
        <position position="76"/>
    </location>
</feature>
<proteinExistence type="inferred from homology"/>
<accession>C5D6M5</accession>
<gene>
    <name evidence="1" type="primary">hemE</name>
    <name type="ordered locus">GWCH70_0649</name>
</gene>
<reference key="1">
    <citation type="submission" date="2009-06" db="EMBL/GenBank/DDBJ databases">
        <title>Complete sequence of chromosome of Geopacillus sp. WCH70.</title>
        <authorList>
            <consortium name="US DOE Joint Genome Institute"/>
            <person name="Lucas S."/>
            <person name="Copeland A."/>
            <person name="Lapidus A."/>
            <person name="Glavina del Rio T."/>
            <person name="Dalin E."/>
            <person name="Tice H."/>
            <person name="Bruce D."/>
            <person name="Goodwin L."/>
            <person name="Pitluck S."/>
            <person name="Chertkov O."/>
            <person name="Brettin T."/>
            <person name="Detter J.C."/>
            <person name="Han C."/>
            <person name="Larimer F."/>
            <person name="Land M."/>
            <person name="Hauser L."/>
            <person name="Kyrpides N."/>
            <person name="Mikhailova N."/>
            <person name="Brumm P."/>
            <person name="Mead D.A."/>
            <person name="Richardson P."/>
        </authorList>
    </citation>
    <scope>NUCLEOTIDE SEQUENCE [LARGE SCALE GENOMIC DNA]</scope>
    <source>
        <strain>WCH70</strain>
    </source>
</reference>
<comment type="function">
    <text evidence="1">Catalyzes the decarboxylation of four acetate groups of uroporphyrinogen-III to yield coproporphyrinogen-III.</text>
</comment>
<comment type="catalytic activity">
    <reaction evidence="1">
        <text>uroporphyrinogen III + 4 H(+) = coproporphyrinogen III + 4 CO2</text>
        <dbReference type="Rhea" id="RHEA:19865"/>
        <dbReference type="ChEBI" id="CHEBI:15378"/>
        <dbReference type="ChEBI" id="CHEBI:16526"/>
        <dbReference type="ChEBI" id="CHEBI:57308"/>
        <dbReference type="ChEBI" id="CHEBI:57309"/>
        <dbReference type="EC" id="4.1.1.37"/>
    </reaction>
</comment>
<comment type="pathway">
    <text evidence="1">Porphyrin-containing compound metabolism; protoporphyrin-IX biosynthesis; coproporphyrinogen-III from 5-aminolevulinate: step 4/4.</text>
</comment>
<comment type="subunit">
    <text evidence="1">Homodimer.</text>
</comment>
<comment type="subcellular location">
    <subcellularLocation>
        <location evidence="1">Cytoplasm</location>
    </subcellularLocation>
</comment>
<comment type="similarity">
    <text evidence="1">Belongs to the uroporphyrinogen decarboxylase family.</text>
</comment>
<name>DCUP_GEOSW</name>
<keyword id="KW-0963">Cytoplasm</keyword>
<keyword id="KW-0210">Decarboxylase</keyword>
<keyword id="KW-0456">Lyase</keyword>
<keyword id="KW-0627">Porphyrin biosynthesis</keyword>
<evidence type="ECO:0000255" key="1">
    <source>
        <dbReference type="HAMAP-Rule" id="MF_00218"/>
    </source>
</evidence>